<reference key="1">
    <citation type="submission" date="2003-08" db="EMBL/GenBank/DDBJ databases">
        <authorList>
            <consortium name="NIH - Xenopus Gene Collection (XGC) project"/>
        </authorList>
    </citation>
    <scope>NUCLEOTIDE SEQUENCE [LARGE SCALE MRNA]</scope>
    <source>
        <tissue>Spleen</tissue>
    </source>
</reference>
<organism>
    <name type="scientific">Xenopus laevis</name>
    <name type="common">African clawed frog</name>
    <dbReference type="NCBI Taxonomy" id="8355"/>
    <lineage>
        <taxon>Eukaryota</taxon>
        <taxon>Metazoa</taxon>
        <taxon>Chordata</taxon>
        <taxon>Craniata</taxon>
        <taxon>Vertebrata</taxon>
        <taxon>Euteleostomi</taxon>
        <taxon>Amphibia</taxon>
        <taxon>Batrachia</taxon>
        <taxon>Anura</taxon>
        <taxon>Pipoidea</taxon>
        <taxon>Pipidae</taxon>
        <taxon>Xenopodinae</taxon>
        <taxon>Xenopus</taxon>
        <taxon>Xenopus</taxon>
    </lineage>
</organism>
<evidence type="ECO:0000250" key="1">
    <source>
        <dbReference type="UniProtKB" id="Q96G28"/>
    </source>
</evidence>
<evidence type="ECO:0000255" key="2"/>
<evidence type="ECO:0000256" key="3">
    <source>
        <dbReference type="SAM" id="MobiDB-lite"/>
    </source>
</evidence>
<evidence type="ECO:0000305" key="4"/>
<keyword id="KW-0966">Cell projection</keyword>
<keyword id="KW-0969">Cilium</keyword>
<keyword id="KW-0175">Coiled coil</keyword>
<keyword id="KW-0963">Cytoplasm</keyword>
<keyword id="KW-0282">Flagellum</keyword>
<keyword id="KW-0539">Nucleus</keyword>
<keyword id="KW-1185">Reference proteome</keyword>
<protein>
    <recommendedName>
        <fullName evidence="4">Cilia- and flagella-associated protein 36</fullName>
    </recommendedName>
    <alternativeName>
        <fullName evidence="4">Coiled-coil domain-containing protein 104</fullName>
    </alternativeName>
</protein>
<accession>Q7T0S7</accession>
<feature type="chain" id="PRO_0000278643" description="Cilia- and flagella-associated protein 36">
    <location>
        <begin position="1"/>
        <end position="338"/>
    </location>
</feature>
<feature type="region of interest" description="Disordered" evidence="3">
    <location>
        <begin position="175"/>
        <end position="220"/>
    </location>
</feature>
<feature type="region of interest" description="Disordered" evidence="3">
    <location>
        <begin position="281"/>
        <end position="314"/>
    </location>
</feature>
<feature type="coiled-coil region" evidence="2">
    <location>
        <begin position="142"/>
        <end position="179"/>
    </location>
</feature>
<feature type="coiled-coil region" evidence="2">
    <location>
        <begin position="255"/>
        <end position="330"/>
    </location>
</feature>
<feature type="compositionally biased region" description="Polar residues" evidence="3">
    <location>
        <begin position="187"/>
        <end position="202"/>
    </location>
</feature>
<name>CFA36_XENLA</name>
<dbReference type="EMBL" id="BC056056">
    <property type="protein sequence ID" value="AAH56056.1"/>
    <property type="molecule type" value="mRNA"/>
</dbReference>
<dbReference type="RefSeq" id="NP_001080839.1">
    <property type="nucleotide sequence ID" value="NM_001087370.1"/>
</dbReference>
<dbReference type="SMR" id="Q7T0S7"/>
<dbReference type="DNASU" id="380533"/>
<dbReference type="GeneID" id="380533"/>
<dbReference type="KEGG" id="xla:380533"/>
<dbReference type="AGR" id="Xenbase:XB-GENE-988927"/>
<dbReference type="CTD" id="380533"/>
<dbReference type="Xenbase" id="XB-GENE-988927">
    <property type="gene designation" value="cfap36.L"/>
</dbReference>
<dbReference type="OMA" id="DWYIPIL"/>
<dbReference type="OrthoDB" id="272687at2759"/>
<dbReference type="Proteomes" id="UP000186698">
    <property type="component" value="Chromosome 5L"/>
</dbReference>
<dbReference type="Bgee" id="380533">
    <property type="expression patterns" value="Expressed in heart and 19 other cell types or tissues"/>
</dbReference>
<dbReference type="GO" id="GO:0005930">
    <property type="term" value="C:axoneme"/>
    <property type="evidence" value="ECO:0000318"/>
    <property type="project" value="GO_Central"/>
</dbReference>
<dbReference type="GO" id="GO:0097546">
    <property type="term" value="C:ciliary base"/>
    <property type="evidence" value="ECO:0000318"/>
    <property type="project" value="GO_Central"/>
</dbReference>
<dbReference type="GO" id="GO:0031514">
    <property type="term" value="C:motile cilium"/>
    <property type="evidence" value="ECO:0007669"/>
    <property type="project" value="UniProtKB-SubCell"/>
</dbReference>
<dbReference type="GO" id="GO:0005634">
    <property type="term" value="C:nucleus"/>
    <property type="evidence" value="ECO:0007669"/>
    <property type="project" value="UniProtKB-SubCell"/>
</dbReference>
<dbReference type="Gene3D" id="1.20.1520.10">
    <property type="entry name" value="ADP-ribosylation factor-like 2-binding protein, domain"/>
    <property type="match status" value="1"/>
</dbReference>
<dbReference type="InterPro" id="IPR023379">
    <property type="entry name" value="BART_dom"/>
</dbReference>
<dbReference type="InterPro" id="IPR042541">
    <property type="entry name" value="BART_sf"/>
</dbReference>
<dbReference type="InterPro" id="IPR038888">
    <property type="entry name" value="CFAP36"/>
</dbReference>
<dbReference type="PANTHER" id="PTHR21532:SF0">
    <property type="entry name" value="CILIA- AND FLAGELLA-ASSOCIATED PROTEIN 36"/>
    <property type="match status" value="1"/>
</dbReference>
<dbReference type="PANTHER" id="PTHR21532">
    <property type="entry name" value="PHOSPHODIESTERASE HL"/>
    <property type="match status" value="1"/>
</dbReference>
<dbReference type="Pfam" id="PF11527">
    <property type="entry name" value="ARL2_Bind_BART"/>
    <property type="match status" value="1"/>
</dbReference>
<sequence length="338" mass="38794">MASDAEWVLESVLGFVSGPVWTVPVLEFMEHKCSVFDDDEENKLSYTDIHNEYKELVETLLTQHLNEVGISEEQFQEACAAPLAHSATLKNILQPVLAVEDFKIFKAMMVQKNIELQLQAIRIIQERNGVLPDCLQHGSDIISDLEQEEMKLVSEALRLSKEEYEREQLRRSAKELNCTFGEHSKTKQSNGSERTPSNTELPDQSHEIEQQPVKMQESPYEEASMKLKEMSNTEAAEAWLEQARKEAGILSSVTNLSQAEKEQLQKRAEYLRRRREELLAKKQESKKMAHNSEVHEEKATCSKQEMTEEEKKSLQRRKQLAEKLKEEVILCEKSGTAS</sequence>
<gene>
    <name evidence="4" type="primary">cfap36</name>
    <name evidence="4" type="synonym">ccdc104</name>
</gene>
<comment type="subcellular location">
    <subcellularLocation>
        <location evidence="1">Nucleus</location>
    </subcellularLocation>
    <subcellularLocation>
        <location evidence="1">Cytoplasm</location>
    </subcellularLocation>
    <subcellularLocation>
        <location evidence="4">Cell projection</location>
        <location evidence="4">Cilium</location>
        <location evidence="4">Flagellum</location>
    </subcellularLocation>
</comment>
<comment type="similarity">
    <text evidence="4">Belongs to the CFAP36 family.</text>
</comment>
<proteinExistence type="evidence at transcript level"/>